<reference key="1">
    <citation type="journal article" date="1999" name="Nature">
        <title>Sequence and analysis of chromosome 2 of the plant Arabidopsis thaliana.</title>
        <authorList>
            <person name="Lin X."/>
            <person name="Kaul S."/>
            <person name="Rounsley S.D."/>
            <person name="Shea T.P."/>
            <person name="Benito M.-I."/>
            <person name="Town C.D."/>
            <person name="Fujii C.Y."/>
            <person name="Mason T.M."/>
            <person name="Bowman C.L."/>
            <person name="Barnstead M.E."/>
            <person name="Feldblyum T.V."/>
            <person name="Buell C.R."/>
            <person name="Ketchum K.A."/>
            <person name="Lee J.J."/>
            <person name="Ronning C.M."/>
            <person name="Koo H.L."/>
            <person name="Moffat K.S."/>
            <person name="Cronin L.A."/>
            <person name="Shen M."/>
            <person name="Pai G."/>
            <person name="Van Aken S."/>
            <person name="Umayam L."/>
            <person name="Tallon L.J."/>
            <person name="Gill J.E."/>
            <person name="Adams M.D."/>
            <person name="Carrera A.J."/>
            <person name="Creasy T.H."/>
            <person name="Goodman H.M."/>
            <person name="Somerville C.R."/>
            <person name="Copenhaver G.P."/>
            <person name="Preuss D."/>
            <person name="Nierman W.C."/>
            <person name="White O."/>
            <person name="Eisen J.A."/>
            <person name="Salzberg S.L."/>
            <person name="Fraser C.M."/>
            <person name="Venter J.C."/>
        </authorList>
    </citation>
    <scope>NUCLEOTIDE SEQUENCE [LARGE SCALE GENOMIC DNA]</scope>
    <source>
        <strain>cv. Columbia</strain>
    </source>
</reference>
<reference key="2">
    <citation type="journal article" date="2017" name="Plant J.">
        <title>Araport11: a complete reannotation of the Arabidopsis thaliana reference genome.</title>
        <authorList>
            <person name="Cheng C.Y."/>
            <person name="Krishnakumar V."/>
            <person name="Chan A.P."/>
            <person name="Thibaud-Nissen F."/>
            <person name="Schobel S."/>
            <person name="Town C.D."/>
        </authorList>
    </citation>
    <scope>GENOME REANNOTATION</scope>
    <source>
        <strain>cv. Columbia</strain>
    </source>
</reference>
<reference key="3">
    <citation type="submission" date="2004-05" db="EMBL/GenBank/DDBJ databases">
        <title>Arabidopsis ORF clones.</title>
        <authorList>
            <person name="Cheuk R.F."/>
            <person name="Chen H."/>
            <person name="Kim C.J."/>
            <person name="Shinn P."/>
            <person name="Carninci P."/>
            <person name="Hayashizaki Y."/>
            <person name="Ishida J."/>
            <person name="Kamiya A."/>
            <person name="Kawai J."/>
            <person name="Narusaka M."/>
            <person name="Sakurai T."/>
            <person name="Satou M."/>
            <person name="Seki M."/>
            <person name="Shinozaki K."/>
            <person name="Ecker J.R."/>
        </authorList>
    </citation>
    <scope>NUCLEOTIDE SEQUENCE [LARGE SCALE MRNA]</scope>
    <source>
        <strain>cv. Columbia</strain>
    </source>
</reference>
<reference key="4">
    <citation type="submission" date="2005-03" db="EMBL/GenBank/DDBJ databases">
        <title>Large-scale analysis of RIKEN Arabidopsis full-length (RAFL) cDNAs.</title>
        <authorList>
            <person name="Totoki Y."/>
            <person name="Seki M."/>
            <person name="Ishida J."/>
            <person name="Nakajima M."/>
            <person name="Enju A."/>
            <person name="Kamiya A."/>
            <person name="Narusaka M."/>
            <person name="Shin-i T."/>
            <person name="Nakagawa M."/>
            <person name="Sakamoto N."/>
            <person name="Oishi K."/>
            <person name="Kohara Y."/>
            <person name="Kobayashi M."/>
            <person name="Toyoda A."/>
            <person name="Sakaki Y."/>
            <person name="Sakurai T."/>
            <person name="Iida K."/>
            <person name="Akiyama K."/>
            <person name="Satou M."/>
            <person name="Toyoda T."/>
            <person name="Konagaya A."/>
            <person name="Carninci P."/>
            <person name="Kawai J."/>
            <person name="Hayashizaki Y."/>
            <person name="Shinozaki K."/>
        </authorList>
    </citation>
    <scope>NUCLEOTIDE SEQUENCE [LARGE SCALE MRNA]</scope>
    <source>
        <strain>cv. Columbia</strain>
    </source>
</reference>
<feature type="chain" id="PRO_0000283403" description="F-box protein At2g41170">
    <location>
        <begin position="1"/>
        <end position="371"/>
    </location>
</feature>
<feature type="domain" description="F-box" evidence="1">
    <location>
        <begin position="56"/>
        <end position="102"/>
    </location>
</feature>
<feature type="sequence conflict" description="In Ref. 4; BAD94811." evidence="2" ref="4">
    <original>E</original>
    <variation>K</variation>
    <location>
        <position position="118"/>
    </location>
</feature>
<name>FB132_ARATH</name>
<keyword id="KW-1185">Reference proteome</keyword>
<sequence>MEKQYLTFISFCFSITICGFLIVSWLARSIIRNGIRTLTWRKETKRKKKNQEDENKMSLLDLPDLTLDCILEKLSPSELCAMTSVCSELRDKCVSDHLWEKHMETKWGRLMGDAAIQEWKSHVATIMRCLTSSSSSSRKSKPNWSSRFVANLKPFAWLSSNHGCENRGSSSYLAPIDSVMYWYSNLENGKFWFPAQVYNRENGHVGFMMSCYDAKIRYDFKTDTFQARYSAHGRRAAEEKVTWQRLRPSQDDTKSRDLHVSDCLHGLRPGDHFEIQWRRTKEFPYGWWFGIVGHLQNCDGVQNCRCDSDENVVMEFRQFRPESPWRRTVIKRKDHRETGNEENGFYGGVKKLGTEEEISTWKQLWPSQALE</sequence>
<dbReference type="EMBL" id="AC004261">
    <property type="protein sequence ID" value="AAD11995.1"/>
    <property type="status" value="ALT_SEQ"/>
    <property type="molecule type" value="Genomic_DNA"/>
</dbReference>
<dbReference type="EMBL" id="CP002685">
    <property type="protein sequence ID" value="AEC09940.1"/>
    <property type="molecule type" value="Genomic_DNA"/>
</dbReference>
<dbReference type="EMBL" id="BT012656">
    <property type="protein sequence ID" value="AAT06475.1"/>
    <property type="molecule type" value="mRNA"/>
</dbReference>
<dbReference type="EMBL" id="AK222049">
    <property type="protein sequence ID" value="BAD94811.1"/>
    <property type="molecule type" value="mRNA"/>
</dbReference>
<dbReference type="PIR" id="T02102">
    <property type="entry name" value="T02102"/>
</dbReference>
<dbReference type="RefSeq" id="NP_850347.1">
    <property type="nucleotide sequence ID" value="NM_180016.4"/>
</dbReference>
<dbReference type="BioGRID" id="4053">
    <property type="interactions" value="4"/>
</dbReference>
<dbReference type="FunCoup" id="Q6NKN8">
    <property type="interactions" value="19"/>
</dbReference>
<dbReference type="STRING" id="3702.Q6NKN8"/>
<dbReference type="PaxDb" id="3702-AT2G41170.1"/>
<dbReference type="EnsemblPlants" id="AT2G41170.1">
    <property type="protein sequence ID" value="AT2G41170.1"/>
    <property type="gene ID" value="AT2G41170"/>
</dbReference>
<dbReference type="GeneID" id="818716"/>
<dbReference type="Gramene" id="AT2G41170.1">
    <property type="protein sequence ID" value="AT2G41170.1"/>
    <property type="gene ID" value="AT2G41170"/>
</dbReference>
<dbReference type="KEGG" id="ath:AT2G41170"/>
<dbReference type="Araport" id="AT2G41170"/>
<dbReference type="TAIR" id="AT2G41170"/>
<dbReference type="eggNOG" id="ENOG502QQCP">
    <property type="taxonomic scope" value="Eukaryota"/>
</dbReference>
<dbReference type="HOGENOM" id="CLU_035285_0_0_1"/>
<dbReference type="InParanoid" id="Q6NKN8"/>
<dbReference type="OMA" id="MENKWGR"/>
<dbReference type="PhylomeDB" id="Q6NKN8"/>
<dbReference type="PRO" id="PR:Q6NKN8"/>
<dbReference type="Proteomes" id="UP000006548">
    <property type="component" value="Chromosome 2"/>
</dbReference>
<dbReference type="ExpressionAtlas" id="Q6NKN8">
    <property type="expression patterns" value="baseline and differential"/>
</dbReference>
<dbReference type="Gene3D" id="1.20.1280.50">
    <property type="match status" value="1"/>
</dbReference>
<dbReference type="InterPro" id="IPR036047">
    <property type="entry name" value="F-box-like_dom_sf"/>
</dbReference>
<dbReference type="InterPro" id="IPR001810">
    <property type="entry name" value="F-box_dom"/>
</dbReference>
<dbReference type="PANTHER" id="PTHR31482">
    <property type="entry name" value="ESTS AU081301(E20138)"/>
    <property type="match status" value="1"/>
</dbReference>
<dbReference type="PANTHER" id="PTHR31482:SF17">
    <property type="entry name" value="F-BOX DOMAIN-CONTAINING PROTEIN"/>
    <property type="match status" value="1"/>
</dbReference>
<dbReference type="Pfam" id="PF00646">
    <property type="entry name" value="F-box"/>
    <property type="match status" value="1"/>
</dbReference>
<dbReference type="SMART" id="SM00256">
    <property type="entry name" value="FBOX"/>
    <property type="match status" value="1"/>
</dbReference>
<dbReference type="SUPFAM" id="SSF81383">
    <property type="entry name" value="F-box domain"/>
    <property type="match status" value="1"/>
</dbReference>
<dbReference type="PROSITE" id="PS50181">
    <property type="entry name" value="FBOX"/>
    <property type="match status" value="1"/>
</dbReference>
<gene>
    <name type="ordered locus">At2g41170</name>
    <name type="ORF">T3K9.6</name>
</gene>
<proteinExistence type="evidence at transcript level"/>
<evidence type="ECO:0000255" key="1">
    <source>
        <dbReference type="PROSITE-ProRule" id="PRU00080"/>
    </source>
</evidence>
<evidence type="ECO:0000305" key="2"/>
<accession>Q6NKN8</accession>
<accession>O80670</accession>
<accession>Q56WJ1</accession>
<protein>
    <recommendedName>
        <fullName>F-box protein At2g41170</fullName>
    </recommendedName>
</protein>
<organism>
    <name type="scientific">Arabidopsis thaliana</name>
    <name type="common">Mouse-ear cress</name>
    <dbReference type="NCBI Taxonomy" id="3702"/>
    <lineage>
        <taxon>Eukaryota</taxon>
        <taxon>Viridiplantae</taxon>
        <taxon>Streptophyta</taxon>
        <taxon>Embryophyta</taxon>
        <taxon>Tracheophyta</taxon>
        <taxon>Spermatophyta</taxon>
        <taxon>Magnoliopsida</taxon>
        <taxon>eudicotyledons</taxon>
        <taxon>Gunneridae</taxon>
        <taxon>Pentapetalae</taxon>
        <taxon>rosids</taxon>
        <taxon>malvids</taxon>
        <taxon>Brassicales</taxon>
        <taxon>Brassicaceae</taxon>
        <taxon>Camelineae</taxon>
        <taxon>Arabidopsis</taxon>
    </lineage>
</organism>
<comment type="sequence caution" evidence="2">
    <conflict type="erroneous gene model prediction">
        <sequence resource="EMBL-CDS" id="AAD11995"/>
    </conflict>
</comment>